<reference key="1">
    <citation type="journal article" date="2008" name="DNA Res.">
        <title>Comparative genome analysis of Lactobacillus reuteri and Lactobacillus fermentum reveal a genomic island for reuterin and cobalamin production.</title>
        <authorList>
            <person name="Morita H."/>
            <person name="Toh H."/>
            <person name="Fukuda S."/>
            <person name="Horikawa H."/>
            <person name="Oshima K."/>
            <person name="Suzuki T."/>
            <person name="Murakami M."/>
            <person name="Hisamatsu S."/>
            <person name="Kato Y."/>
            <person name="Takizawa T."/>
            <person name="Fukuoka H."/>
            <person name="Yoshimura T."/>
            <person name="Itoh K."/>
            <person name="O'Sullivan D.J."/>
            <person name="McKay L.L."/>
            <person name="Ohno H."/>
            <person name="Kikuchi J."/>
            <person name="Masaoka T."/>
            <person name="Hattori M."/>
        </authorList>
    </citation>
    <scope>NUCLEOTIDE SEQUENCE [LARGE SCALE GENOMIC DNA]</scope>
    <source>
        <strain>JCM 1112</strain>
    </source>
</reference>
<dbReference type="EC" id="3.1.-.-" evidence="1"/>
<dbReference type="EC" id="5.6.2.4" evidence="1"/>
<dbReference type="EMBL" id="AP007281">
    <property type="protein sequence ID" value="BAG24564.1"/>
    <property type="molecule type" value="Genomic_DNA"/>
</dbReference>
<dbReference type="RefSeq" id="WP_003669565.1">
    <property type="nucleotide sequence ID" value="NC_010609.1"/>
</dbReference>
<dbReference type="SMR" id="B2G532"/>
<dbReference type="KEGG" id="lrf:LAR_0048"/>
<dbReference type="HOGENOM" id="CLU_001114_3_1_9"/>
<dbReference type="GO" id="GO:0005829">
    <property type="term" value="C:cytosol"/>
    <property type="evidence" value="ECO:0007669"/>
    <property type="project" value="TreeGrafter"/>
</dbReference>
<dbReference type="GO" id="GO:0033202">
    <property type="term" value="C:DNA helicase complex"/>
    <property type="evidence" value="ECO:0007669"/>
    <property type="project" value="TreeGrafter"/>
</dbReference>
<dbReference type="GO" id="GO:0043138">
    <property type="term" value="F:3'-5' DNA helicase activity"/>
    <property type="evidence" value="ECO:0007669"/>
    <property type="project" value="UniProtKB-UniRule"/>
</dbReference>
<dbReference type="GO" id="GO:0008408">
    <property type="term" value="F:3'-5' exonuclease activity"/>
    <property type="evidence" value="ECO:0007669"/>
    <property type="project" value="UniProtKB-UniRule"/>
</dbReference>
<dbReference type="GO" id="GO:0005524">
    <property type="term" value="F:ATP binding"/>
    <property type="evidence" value="ECO:0007669"/>
    <property type="project" value="UniProtKB-UniRule"/>
</dbReference>
<dbReference type="GO" id="GO:0016887">
    <property type="term" value="F:ATP hydrolysis activity"/>
    <property type="evidence" value="ECO:0007669"/>
    <property type="project" value="RHEA"/>
</dbReference>
<dbReference type="GO" id="GO:0003690">
    <property type="term" value="F:double-stranded DNA binding"/>
    <property type="evidence" value="ECO:0007669"/>
    <property type="project" value="UniProtKB-UniRule"/>
</dbReference>
<dbReference type="GO" id="GO:0000724">
    <property type="term" value="P:double-strand break repair via homologous recombination"/>
    <property type="evidence" value="ECO:0007669"/>
    <property type="project" value="UniProtKB-UniRule"/>
</dbReference>
<dbReference type="CDD" id="cd17932">
    <property type="entry name" value="DEXQc_UvrD"/>
    <property type="match status" value="1"/>
</dbReference>
<dbReference type="Gene3D" id="1.10.10.160">
    <property type="match status" value="1"/>
</dbReference>
<dbReference type="Gene3D" id="3.90.320.10">
    <property type="match status" value="1"/>
</dbReference>
<dbReference type="Gene3D" id="6.10.250.2380">
    <property type="match status" value="1"/>
</dbReference>
<dbReference type="Gene3D" id="3.40.50.300">
    <property type="entry name" value="P-loop containing nucleotide triphosphate hydrolases"/>
    <property type="match status" value="4"/>
</dbReference>
<dbReference type="HAMAP" id="MF_01451">
    <property type="entry name" value="AddA"/>
    <property type="match status" value="1"/>
</dbReference>
<dbReference type="InterPro" id="IPR014152">
    <property type="entry name" value="AddA"/>
</dbReference>
<dbReference type="InterPro" id="IPR013986">
    <property type="entry name" value="DExx_box_DNA_helicase_dom_sf"/>
</dbReference>
<dbReference type="InterPro" id="IPR014017">
    <property type="entry name" value="DNA_helicase_UvrD-like_C"/>
</dbReference>
<dbReference type="InterPro" id="IPR000212">
    <property type="entry name" value="DNA_helicase_UvrD/REP"/>
</dbReference>
<dbReference type="InterPro" id="IPR027417">
    <property type="entry name" value="P-loop_NTPase"/>
</dbReference>
<dbReference type="InterPro" id="IPR011604">
    <property type="entry name" value="PDDEXK-like_dom_sf"/>
</dbReference>
<dbReference type="InterPro" id="IPR011335">
    <property type="entry name" value="Restrct_endonuc-II-like"/>
</dbReference>
<dbReference type="InterPro" id="IPR014016">
    <property type="entry name" value="UvrD-like_ATP-bd"/>
</dbReference>
<dbReference type="NCBIfam" id="TIGR02785">
    <property type="entry name" value="addA_Gpos"/>
    <property type="match status" value="1"/>
</dbReference>
<dbReference type="PANTHER" id="PTHR11070:SF48">
    <property type="entry name" value="ATP-DEPENDENT HELICASE_NUCLEASE SUBUNIT A"/>
    <property type="match status" value="1"/>
</dbReference>
<dbReference type="PANTHER" id="PTHR11070">
    <property type="entry name" value="UVRD / RECB / PCRA DNA HELICASE FAMILY MEMBER"/>
    <property type="match status" value="1"/>
</dbReference>
<dbReference type="Pfam" id="PF13245">
    <property type="entry name" value="AAA_19"/>
    <property type="match status" value="1"/>
</dbReference>
<dbReference type="Pfam" id="PF00580">
    <property type="entry name" value="UvrD-helicase"/>
    <property type="match status" value="1"/>
</dbReference>
<dbReference type="Pfam" id="PF13361">
    <property type="entry name" value="UvrD_C"/>
    <property type="match status" value="1"/>
</dbReference>
<dbReference type="SUPFAM" id="SSF52540">
    <property type="entry name" value="P-loop containing nucleoside triphosphate hydrolases"/>
    <property type="match status" value="1"/>
</dbReference>
<dbReference type="SUPFAM" id="SSF52980">
    <property type="entry name" value="Restriction endonuclease-like"/>
    <property type="match status" value="1"/>
</dbReference>
<dbReference type="PROSITE" id="PS51198">
    <property type="entry name" value="UVRD_HELICASE_ATP_BIND"/>
    <property type="match status" value="1"/>
</dbReference>
<dbReference type="PROSITE" id="PS51217">
    <property type="entry name" value="UVRD_HELICASE_CTER"/>
    <property type="match status" value="1"/>
</dbReference>
<protein>
    <recommendedName>
        <fullName evidence="1">ATP-dependent helicase/nuclease subunit A</fullName>
        <ecNumber evidence="1">3.1.-.-</ecNumber>
        <ecNumber evidence="1">5.6.2.4</ecNumber>
    </recommendedName>
    <alternativeName>
        <fullName evidence="1">ATP-dependent helicase/nuclease AddA</fullName>
    </alternativeName>
    <alternativeName>
        <fullName evidence="1">DNA 3'-5' helicase AddA</fullName>
    </alternativeName>
</protein>
<gene>
    <name evidence="1" type="primary">addA</name>
    <name type="ordered locus">LAR_0048</name>
</gene>
<proteinExistence type="inferred from homology"/>
<accession>B2G532</accession>
<evidence type="ECO:0000255" key="1">
    <source>
        <dbReference type="HAMAP-Rule" id="MF_01451"/>
    </source>
</evidence>
<keyword id="KW-0067">ATP-binding</keyword>
<keyword id="KW-0227">DNA damage</keyword>
<keyword id="KW-0234">DNA repair</keyword>
<keyword id="KW-0238">DNA-binding</keyword>
<keyword id="KW-0269">Exonuclease</keyword>
<keyword id="KW-0347">Helicase</keyword>
<keyword id="KW-0378">Hydrolase</keyword>
<keyword id="KW-0413">Isomerase</keyword>
<keyword id="KW-0540">Nuclease</keyword>
<keyword id="KW-0547">Nucleotide-binding</keyword>
<name>ADDA_LIMRJ</name>
<organism>
    <name type="scientific">Limosilactobacillus reuteri subsp. reuteri (strain JCM 1112)</name>
    <name type="common">Lactobacillus reuteri</name>
    <dbReference type="NCBI Taxonomy" id="557433"/>
    <lineage>
        <taxon>Bacteria</taxon>
        <taxon>Bacillati</taxon>
        <taxon>Bacillota</taxon>
        <taxon>Bacilli</taxon>
        <taxon>Lactobacillales</taxon>
        <taxon>Lactobacillaceae</taxon>
        <taxon>Limosilactobacillus</taxon>
    </lineage>
</organism>
<feature type="chain" id="PRO_0000379287" description="ATP-dependent helicase/nuclease subunit A">
    <location>
        <begin position="1"/>
        <end position="1392"/>
    </location>
</feature>
<feature type="domain" description="UvrD-like helicase ATP-binding" evidence="1">
    <location>
        <begin position="4"/>
        <end position="595"/>
    </location>
</feature>
<feature type="domain" description="UvrD-like helicase C-terminal" evidence="1">
    <location>
        <begin position="623"/>
        <end position="929"/>
    </location>
</feature>
<feature type="binding site" evidence="1">
    <location>
        <begin position="25"/>
        <end position="32"/>
    </location>
    <ligand>
        <name>ATP</name>
        <dbReference type="ChEBI" id="CHEBI:30616"/>
    </ligand>
</feature>
<comment type="function">
    <text evidence="1">The heterodimer acts as both an ATP-dependent DNA helicase and an ATP-dependent, dual-direction single-stranded exonuclease. Recognizes the chi site generating a DNA molecule suitable for the initiation of homologous recombination. The AddA nuclease domain is required for chi fragment generation; this subunit has the helicase and 3' -&gt; 5' nuclease activities.</text>
</comment>
<comment type="catalytic activity">
    <reaction evidence="1">
        <text>Couples ATP hydrolysis with the unwinding of duplex DNA by translocating in the 3'-5' direction.</text>
        <dbReference type="EC" id="5.6.2.4"/>
    </reaction>
</comment>
<comment type="catalytic activity">
    <reaction evidence="1">
        <text>ATP + H2O = ADP + phosphate + H(+)</text>
        <dbReference type="Rhea" id="RHEA:13065"/>
        <dbReference type="ChEBI" id="CHEBI:15377"/>
        <dbReference type="ChEBI" id="CHEBI:15378"/>
        <dbReference type="ChEBI" id="CHEBI:30616"/>
        <dbReference type="ChEBI" id="CHEBI:43474"/>
        <dbReference type="ChEBI" id="CHEBI:456216"/>
        <dbReference type="EC" id="5.6.2.4"/>
    </reaction>
</comment>
<comment type="cofactor">
    <cofactor evidence="1">
        <name>Mg(2+)</name>
        <dbReference type="ChEBI" id="CHEBI:18420"/>
    </cofactor>
</comment>
<comment type="subunit">
    <text evidence="1">Heterodimer of AddA and AddB/RexB.</text>
</comment>
<comment type="similarity">
    <text evidence="1">Belongs to the helicase family. AddA subfamily.</text>
</comment>
<sequence length="1392" mass="159710">MAGFKPTPAQSKAINDRGENILVSASAGSGKTAVLVNRTIELIKEGQSIDRMLLVTFTDAAAKNMRDKIRAALQKIVQDSANPKDLRDRMSNQINRLAAADISTIHAFCLKLIKRYYYLIDLDPQFRLLTDETERLLLQEDVWHEVSEELYRNAEEKVSGKASFSELVLNFSSDRDDQGLDDLILRLYEIANAQPDPEKWLQKLPDNYDLGSGSLLESNFYQQQLKPLVIEKLNQFIQDYRELVTRASDNGLDQAAEVIKSDEELMHQLLSSLGGITVSDVCQMMAQQKFGSFRGRPAADDPRIDVFKDIQKQRNQLKKQWEQMVSTYLGKQEAQEPIAKEELLTELTTFSDQFTDLLSKATESQLDAKTVDSLQKDQQMMQELLDLLQPPTWNTIRDLFANAKFARMGGKPKDDELAEEVYKSLGSARTGIKKQFDQLVDRFFNYREDQFRLISTHAQELLRELSAVTINFRRRYQQTKLNRHVLEFSDLEHYAYAILTPPDDQPNWQTLVKDLQNHYQEIMIDEYQDTNRLQESILMKLTSPERKNLFMVGDVKQSIYRFREADPTLFLGKYQNYRQGSDGEAIVLGENFRSMTNVTSFTNILFEQLMDREVGEIDYDEDAHLKYAATYYEENQDNKVHPTEVLLYDANALDPEKEDVEHEDDKLAGEFRMIGMRIKQMVENQELIFHPEDGQMHPIQYGDIVLLERTKAINNSLMEEFNKLNIPLTVHDVESYFQATEVRVMMSLLKIIDNPQQDIPLVAVLRSPIVGLTNQELAFIRLQNRSVDYYAALQTFMSNYQRKALRHQSLLTSEQVNALYEKADHFLGLLRVFRQTAQQQTLVDLIWQIYDQTGYLDYVGAMPGGHQRQANLHALYQRAHSYEQSSFKGLYQFIRFIEKMQEHDKDLGVAPTQLTANTVNVMTIHGSKGLQFPVVFLIDATHGFNKGAARENAVVDAVAGVGIRYMDDQRVIYDTPQRQAVIEEIQRGERAEDLRVLYVALTRAEQRLVITGSFNEEMRTQSLAGSWQRWQKAYQSKNLLIGPQPRITANSFMDWVGLALARYPEFNAQQLSRGNVTLEESTLADTKVTGLAADPHFTAKTYTALDVSDGLAKIGQNASANVTEKNNTVATDASEQKIEQILRYRYPHLVATKTTAYQSVTDVKRVFEDPDTRDMARWDYDQQQKVKTQGIYLNNNFDVPAFIQQTTHEPVATEIGTATHLVFQKLPLDEGLINVEFVDQEIQKLVGEKLINPVVAARINREGIVAFYQTAVGQKILKHPADYHREVPFSMIMNGHELFKGVNVSDDERILIHGIIDGYLRTDEGIILVDYKNDHLNKDYRDFDLARIKDRYRGQLELYKEALNLMEGIPVVQMGLYLLELGEFVLFTKEGD</sequence>